<sequence>MGSLESEKTVTGYAARDSSGHLSPYTYNLRKKGPEDVIVKVIYCGICHSDLVQMRNEMGMSHYPMVPGHEVVGIVTEIGSEVKKFKVGEHVGVGCIVGSCRSCGNCNQSMEQYCSKRIWTYNDVNHDGTPTQGGFASSMVVDQMFVVRIPENLPLEQAAPLLCAGVTVFSPMKHFAMTEPGKKCGILGLGGVGHLGVKIAKAFGLHVTVISSSDKKKEEAMEVLGADAYLVSKDTEKMMEAAESLDYIMDTIPVAHPLEPYLALLKTNGKLVMLGVVPEPLHFVTPPLILGRRSIAGSFIGGMEETQETLDFCAEKKVSSMIEVVGLDYINTAMERLEKNDVRYRFVVDVAGSELDN</sequence>
<evidence type="ECO:0000250" key="1">
    <source>
        <dbReference type="UniProtKB" id="O49482"/>
    </source>
</evidence>
<evidence type="ECO:0000305" key="2"/>
<reference key="1">
    <citation type="journal article" date="1995" name="Mol. Gen. Genet.">
        <title>Genetic analysis of cinnamyl alcohol dehydrogenase in loblolly pine: single gene inheritance, molecular characterization and evolution.</title>
        <authorList>
            <person name="Mackay J.J."/>
            <person name="Liu W."/>
            <person name="Whetten R."/>
            <person name="Sederoff R."/>
            <person name="O'Malley D."/>
        </authorList>
    </citation>
    <scope>NUCLEOTIDE SEQUENCE [MRNA]</scope>
    <source>
        <tissue>Xylem</tissue>
    </source>
</reference>
<dbReference type="EC" id="1.1.1.195" evidence="1"/>
<dbReference type="EMBL" id="Z37991">
    <property type="protein sequence ID" value="CAA86072.1"/>
    <property type="molecule type" value="mRNA"/>
</dbReference>
<dbReference type="EMBL" id="Z37992">
    <property type="protein sequence ID" value="CAA86073.1"/>
    <property type="molecule type" value="mRNA"/>
</dbReference>
<dbReference type="PIR" id="S49443">
    <property type="entry name" value="S49443"/>
</dbReference>
<dbReference type="PIR" id="S49444">
    <property type="entry name" value="S49444"/>
</dbReference>
<dbReference type="SMR" id="P41637"/>
<dbReference type="UniPathway" id="UPA00711"/>
<dbReference type="GO" id="GO:0045551">
    <property type="term" value="F:cinnamyl-alcohol dehydrogenase activity"/>
    <property type="evidence" value="ECO:0007669"/>
    <property type="project" value="UniProtKB-EC"/>
</dbReference>
<dbReference type="GO" id="GO:0050268">
    <property type="term" value="F:coniferyl-alcohol dehydrogenase activity"/>
    <property type="evidence" value="ECO:0007669"/>
    <property type="project" value="RHEA"/>
</dbReference>
<dbReference type="GO" id="GO:0008270">
    <property type="term" value="F:zinc ion binding"/>
    <property type="evidence" value="ECO:0007669"/>
    <property type="project" value="InterPro"/>
</dbReference>
<dbReference type="GO" id="GO:0009809">
    <property type="term" value="P:lignin biosynthetic process"/>
    <property type="evidence" value="ECO:0007669"/>
    <property type="project" value="UniProtKB-KW"/>
</dbReference>
<dbReference type="CDD" id="cd05283">
    <property type="entry name" value="CAD1"/>
    <property type="match status" value="1"/>
</dbReference>
<dbReference type="FunFam" id="3.40.50.720:FF:000022">
    <property type="entry name" value="Cinnamyl alcohol dehydrogenase"/>
    <property type="match status" value="1"/>
</dbReference>
<dbReference type="FunFam" id="3.90.180.10:FF:000004">
    <property type="entry name" value="probable cinnamyl alcohol dehydrogenase"/>
    <property type="match status" value="1"/>
</dbReference>
<dbReference type="FunFam" id="3.90.180.10:FF:000100">
    <property type="entry name" value="Putative cinnamyl alcohol dehydrogenase 6"/>
    <property type="match status" value="1"/>
</dbReference>
<dbReference type="Gene3D" id="3.90.180.10">
    <property type="entry name" value="Medium-chain alcohol dehydrogenases, catalytic domain"/>
    <property type="match status" value="1"/>
</dbReference>
<dbReference type="Gene3D" id="3.40.50.720">
    <property type="entry name" value="NAD(P)-binding Rossmann-like Domain"/>
    <property type="match status" value="1"/>
</dbReference>
<dbReference type="InterPro" id="IPR013149">
    <property type="entry name" value="ADH-like_C"/>
</dbReference>
<dbReference type="InterPro" id="IPR013154">
    <property type="entry name" value="ADH-like_N"/>
</dbReference>
<dbReference type="InterPro" id="IPR002328">
    <property type="entry name" value="ADH_Zn_CS"/>
</dbReference>
<dbReference type="InterPro" id="IPR047109">
    <property type="entry name" value="CAD-like"/>
</dbReference>
<dbReference type="InterPro" id="IPR011032">
    <property type="entry name" value="GroES-like_sf"/>
</dbReference>
<dbReference type="InterPro" id="IPR036291">
    <property type="entry name" value="NAD(P)-bd_dom_sf"/>
</dbReference>
<dbReference type="InterPro" id="IPR020843">
    <property type="entry name" value="PKS_ER"/>
</dbReference>
<dbReference type="PANTHER" id="PTHR42683">
    <property type="entry name" value="ALDEHYDE REDUCTASE"/>
    <property type="match status" value="1"/>
</dbReference>
<dbReference type="Pfam" id="PF08240">
    <property type="entry name" value="ADH_N"/>
    <property type="match status" value="1"/>
</dbReference>
<dbReference type="Pfam" id="PF00107">
    <property type="entry name" value="ADH_zinc_N"/>
    <property type="match status" value="1"/>
</dbReference>
<dbReference type="SMART" id="SM00829">
    <property type="entry name" value="PKS_ER"/>
    <property type="match status" value="1"/>
</dbReference>
<dbReference type="SUPFAM" id="SSF50129">
    <property type="entry name" value="GroES-like"/>
    <property type="match status" value="1"/>
</dbReference>
<dbReference type="SUPFAM" id="SSF51735">
    <property type="entry name" value="NAD(P)-binding Rossmann-fold domains"/>
    <property type="match status" value="1"/>
</dbReference>
<dbReference type="PROSITE" id="PS00059">
    <property type="entry name" value="ADH_ZINC"/>
    <property type="match status" value="1"/>
</dbReference>
<protein>
    <recommendedName>
        <fullName>Probable cinnamyl alcohol dehydrogenase</fullName>
        <shortName>CAD</shortName>
        <ecNumber evidence="1">1.1.1.195</ecNumber>
    </recommendedName>
</protein>
<feature type="chain" id="PRO_0000160802" description="Probable cinnamyl alcohol dehydrogenase">
    <location>
        <begin position="1"/>
        <end position="357"/>
    </location>
</feature>
<feature type="binding site" evidence="1">
    <location>
        <position position="47"/>
    </location>
    <ligand>
        <name>Zn(2+)</name>
        <dbReference type="ChEBI" id="CHEBI:29105"/>
        <label>1</label>
        <note>catalytic</note>
    </ligand>
</feature>
<feature type="binding site" evidence="1">
    <location>
        <position position="49"/>
    </location>
    <ligand>
        <name>NADP(+)</name>
        <dbReference type="ChEBI" id="CHEBI:58349"/>
    </ligand>
</feature>
<feature type="binding site" evidence="1">
    <location>
        <position position="69"/>
    </location>
    <ligand>
        <name>Zn(2+)</name>
        <dbReference type="ChEBI" id="CHEBI:29105"/>
        <label>1</label>
        <note>catalytic</note>
    </ligand>
</feature>
<feature type="binding site" evidence="1">
    <location>
        <position position="70"/>
    </location>
    <ligand>
        <name>Zn(2+)</name>
        <dbReference type="ChEBI" id="CHEBI:29105"/>
        <label>1</label>
        <note>catalytic</note>
    </ligand>
</feature>
<feature type="binding site" evidence="1">
    <location>
        <position position="100"/>
    </location>
    <ligand>
        <name>Zn(2+)</name>
        <dbReference type="ChEBI" id="CHEBI:29105"/>
        <label>2</label>
    </ligand>
</feature>
<feature type="binding site" evidence="1">
    <location>
        <position position="103"/>
    </location>
    <ligand>
        <name>Zn(2+)</name>
        <dbReference type="ChEBI" id="CHEBI:29105"/>
        <label>2</label>
    </ligand>
</feature>
<feature type="binding site" evidence="1">
    <location>
        <position position="106"/>
    </location>
    <ligand>
        <name>Zn(2+)</name>
        <dbReference type="ChEBI" id="CHEBI:29105"/>
        <label>2</label>
    </ligand>
</feature>
<feature type="binding site" evidence="1">
    <location>
        <position position="114"/>
    </location>
    <ligand>
        <name>Zn(2+)</name>
        <dbReference type="ChEBI" id="CHEBI:29105"/>
        <label>2</label>
    </ligand>
</feature>
<feature type="binding site" evidence="1">
    <location>
        <position position="163"/>
    </location>
    <ligand>
        <name>Zn(2+)</name>
        <dbReference type="ChEBI" id="CHEBI:29105"/>
        <label>1</label>
        <note>catalytic</note>
    </ligand>
</feature>
<feature type="binding site" evidence="1">
    <location>
        <position position="167"/>
    </location>
    <ligand>
        <name>NADP(+)</name>
        <dbReference type="ChEBI" id="CHEBI:58349"/>
    </ligand>
</feature>
<feature type="binding site" evidence="1">
    <location>
        <begin position="188"/>
        <end position="193"/>
    </location>
    <ligand>
        <name>NADP(+)</name>
        <dbReference type="ChEBI" id="CHEBI:58349"/>
    </ligand>
</feature>
<feature type="binding site" evidence="1">
    <location>
        <begin position="211"/>
        <end position="216"/>
    </location>
    <ligand>
        <name>NADP(+)</name>
        <dbReference type="ChEBI" id="CHEBI:58349"/>
    </ligand>
</feature>
<feature type="binding site" evidence="1">
    <location>
        <position position="251"/>
    </location>
    <ligand>
        <name>NADP(+)</name>
        <dbReference type="ChEBI" id="CHEBI:58349"/>
    </ligand>
</feature>
<feature type="binding site" evidence="1">
    <location>
        <position position="275"/>
    </location>
    <ligand>
        <name>NADP(+)</name>
        <dbReference type="ChEBI" id="CHEBI:58349"/>
    </ligand>
</feature>
<feature type="binding site" evidence="1">
    <location>
        <begin position="298"/>
        <end position="300"/>
    </location>
    <ligand>
        <name>NADP(+)</name>
        <dbReference type="ChEBI" id="CHEBI:58349"/>
    </ligand>
</feature>
<feature type="sequence variant">
    <original>L</original>
    <variation>M</variation>
    <location>
        <position position="195"/>
    </location>
</feature>
<feature type="sequence variant">
    <original>P</original>
    <variation>L</variation>
    <location>
        <position position="287"/>
    </location>
</feature>
<feature type="sequence variant">
    <original>G</original>
    <variation>S</variation>
    <location>
        <position position="302"/>
    </location>
</feature>
<feature type="sequence variant">
    <original>E</original>
    <variation>K</variation>
    <location>
        <position position="335"/>
    </location>
</feature>
<feature type="sequence variant">
    <original>G</original>
    <variation>A</variation>
    <location>
        <position position="352"/>
    </location>
</feature>
<feature type="sequence variant">
    <original>E</original>
    <variation>K</variation>
    <location>
        <position position="354"/>
    </location>
</feature>
<accession>P41637</accession>
<name>CADH_PINTA</name>
<comment type="function">
    <text evidence="1">Involved in lignin biosynthesis. Catalyzes the final step specific for the production of lignin monomers. Catalyzes the NADPH-dependent reduction of coniferaldehyde, 5-hydroxyconiferaldehyde, sinapaldehyde, 4-coumaraldehyde and caffeyl aldehyde to their respective alcohols.</text>
</comment>
<comment type="catalytic activity">
    <reaction evidence="1">
        <text>(E)-cinnamyl alcohol + NADP(+) = (E)-cinnamaldehyde + NADPH + H(+)</text>
        <dbReference type="Rhea" id="RHEA:10392"/>
        <dbReference type="ChEBI" id="CHEBI:15378"/>
        <dbReference type="ChEBI" id="CHEBI:16731"/>
        <dbReference type="ChEBI" id="CHEBI:33227"/>
        <dbReference type="ChEBI" id="CHEBI:57783"/>
        <dbReference type="ChEBI" id="CHEBI:58349"/>
        <dbReference type="EC" id="1.1.1.195"/>
    </reaction>
    <physiologicalReaction direction="right-to-left" evidence="1">
        <dbReference type="Rhea" id="RHEA:10394"/>
    </physiologicalReaction>
</comment>
<comment type="catalytic activity">
    <reaction evidence="1">
        <text>(E)-coniferol + NADP(+) = (E)-coniferaldehyde + NADPH + H(+)</text>
        <dbReference type="Rhea" id="RHEA:22444"/>
        <dbReference type="ChEBI" id="CHEBI:15378"/>
        <dbReference type="ChEBI" id="CHEBI:16547"/>
        <dbReference type="ChEBI" id="CHEBI:17745"/>
        <dbReference type="ChEBI" id="CHEBI:57783"/>
        <dbReference type="ChEBI" id="CHEBI:58349"/>
        <dbReference type="EC" id="1.1.1.195"/>
    </reaction>
    <physiologicalReaction direction="right-to-left" evidence="1">
        <dbReference type="Rhea" id="RHEA:22446"/>
    </physiologicalReaction>
</comment>
<comment type="catalytic activity">
    <reaction evidence="1">
        <text>(E)-sinapyl alcohol + NADP(+) = (E)-sinapaldehyde + NADPH + H(+)</text>
        <dbReference type="Rhea" id="RHEA:45704"/>
        <dbReference type="ChEBI" id="CHEBI:15378"/>
        <dbReference type="ChEBI" id="CHEBI:27949"/>
        <dbReference type="ChEBI" id="CHEBI:57783"/>
        <dbReference type="ChEBI" id="CHEBI:58349"/>
        <dbReference type="ChEBI" id="CHEBI:64557"/>
        <dbReference type="EC" id="1.1.1.195"/>
    </reaction>
    <physiologicalReaction direction="right-to-left" evidence="1">
        <dbReference type="Rhea" id="RHEA:45706"/>
    </physiologicalReaction>
</comment>
<comment type="catalytic activity">
    <reaction evidence="1">
        <text>(E)-4-coumaroyl alcohol + NADP(+) = (E)-4-coumaraldehyde + NADPH + H(+)</text>
        <dbReference type="Rhea" id="RHEA:45724"/>
        <dbReference type="ChEBI" id="CHEBI:15378"/>
        <dbReference type="ChEBI" id="CHEBI:28353"/>
        <dbReference type="ChEBI" id="CHEBI:57783"/>
        <dbReference type="ChEBI" id="CHEBI:58349"/>
        <dbReference type="ChEBI" id="CHEBI:64555"/>
        <dbReference type="EC" id="1.1.1.195"/>
    </reaction>
    <physiologicalReaction direction="right-to-left" evidence="1">
        <dbReference type="Rhea" id="RHEA:45726"/>
    </physiologicalReaction>
</comment>
<comment type="catalytic activity">
    <reaction evidence="1">
        <text>(E)-caffeyl alcohol + NADP(+) = (E)-caffeyl aldehyde + NADPH + H(+)</text>
        <dbReference type="Rhea" id="RHEA:45728"/>
        <dbReference type="ChEBI" id="CHEBI:15378"/>
        <dbReference type="ChEBI" id="CHEBI:28323"/>
        <dbReference type="ChEBI" id="CHEBI:31334"/>
        <dbReference type="ChEBI" id="CHEBI:57783"/>
        <dbReference type="ChEBI" id="CHEBI:58349"/>
    </reaction>
    <physiologicalReaction direction="right-to-left" evidence="1">
        <dbReference type="Rhea" id="RHEA:45730"/>
    </physiologicalReaction>
</comment>
<comment type="cofactor">
    <cofactor evidence="1">
        <name>Zn(2+)</name>
        <dbReference type="ChEBI" id="CHEBI:29105"/>
    </cofactor>
    <text evidence="1">Binds 2 Zn(2+) ions per subunit.</text>
</comment>
<comment type="pathway">
    <text evidence="1">Aromatic compound metabolism; phenylpropanoid biosynthesis.</text>
</comment>
<comment type="subunit">
    <text evidence="1">Homodimer.</text>
</comment>
<comment type="similarity">
    <text evidence="2">Belongs to the zinc-containing alcohol dehydrogenase family.</text>
</comment>
<proteinExistence type="evidence at transcript level"/>
<organism>
    <name type="scientific">Pinus taeda</name>
    <name type="common">Loblolly pine</name>
    <dbReference type="NCBI Taxonomy" id="3352"/>
    <lineage>
        <taxon>Eukaryota</taxon>
        <taxon>Viridiplantae</taxon>
        <taxon>Streptophyta</taxon>
        <taxon>Embryophyta</taxon>
        <taxon>Tracheophyta</taxon>
        <taxon>Spermatophyta</taxon>
        <taxon>Pinopsida</taxon>
        <taxon>Pinidae</taxon>
        <taxon>Conifers I</taxon>
        <taxon>Pinales</taxon>
        <taxon>Pinaceae</taxon>
        <taxon>Pinus</taxon>
        <taxon>Pinus subgen. Pinus</taxon>
    </lineage>
</organism>
<keyword id="KW-0438">Lignin biosynthesis</keyword>
<keyword id="KW-0479">Metal-binding</keyword>
<keyword id="KW-0521">NADP</keyword>
<keyword id="KW-0560">Oxidoreductase</keyword>
<keyword id="KW-0862">Zinc</keyword>